<gene>
    <name type="primary">vapB11</name>
    <name type="ordered locus">MT1611</name>
</gene>
<proteinExistence type="inferred from homology"/>
<protein>
    <recommendedName>
        <fullName>Antitoxin VapB11</fullName>
    </recommendedName>
</protein>
<comment type="function">
    <text evidence="1">Antitoxin component of a type II toxin-antitoxin (TA) system.</text>
</comment>
<dbReference type="EMBL" id="AE000516">
    <property type="protein sequence ID" value="AAK45878.1"/>
    <property type="molecule type" value="Genomic_DNA"/>
</dbReference>
<dbReference type="PIR" id="E70763">
    <property type="entry name" value="E70763"/>
</dbReference>
<dbReference type="SMR" id="P9WLU2"/>
<dbReference type="KEGG" id="mtc:MT1611"/>
<dbReference type="PATRIC" id="fig|83331.31.peg.1733"/>
<dbReference type="HOGENOM" id="CLU_179376_3_1_11"/>
<dbReference type="Proteomes" id="UP000001020">
    <property type="component" value="Chromosome"/>
</dbReference>
<dbReference type="InterPro" id="IPR019239">
    <property type="entry name" value="VapB_antitoxin"/>
</dbReference>
<dbReference type="Pfam" id="PF09957">
    <property type="entry name" value="VapB_antitoxin"/>
    <property type="match status" value="1"/>
</dbReference>
<keyword id="KW-1185">Reference proteome</keyword>
<keyword id="KW-1277">Toxin-antitoxin system</keyword>
<reference key="1">
    <citation type="journal article" date="2002" name="J. Bacteriol.">
        <title>Whole-genome comparison of Mycobacterium tuberculosis clinical and laboratory strains.</title>
        <authorList>
            <person name="Fleischmann R.D."/>
            <person name="Alland D."/>
            <person name="Eisen J.A."/>
            <person name="Carpenter L."/>
            <person name="White O."/>
            <person name="Peterson J.D."/>
            <person name="DeBoy R.T."/>
            <person name="Dodson R.J."/>
            <person name="Gwinn M.L."/>
            <person name="Haft D.H."/>
            <person name="Hickey E.K."/>
            <person name="Kolonay J.F."/>
            <person name="Nelson W.C."/>
            <person name="Umayam L.A."/>
            <person name="Ermolaeva M.D."/>
            <person name="Salzberg S.L."/>
            <person name="Delcher A."/>
            <person name="Utterback T.R."/>
            <person name="Weidman J.F."/>
            <person name="Khouri H.M."/>
            <person name="Gill J."/>
            <person name="Mikula A."/>
            <person name="Bishai W."/>
            <person name="Jacobs W.R. Jr."/>
            <person name="Venter J.C."/>
            <person name="Fraser C.M."/>
        </authorList>
    </citation>
    <scope>NUCLEOTIDE SEQUENCE [LARGE SCALE GENOMIC DNA]</scope>
    <source>
        <strain>CDC 1551 / Oshkosh</strain>
    </source>
</reference>
<name>VPB11_MYCTO</name>
<feature type="chain" id="PRO_0000427419" description="Antitoxin VapB11">
    <location>
        <begin position="1"/>
        <end position="72"/>
    </location>
</feature>
<evidence type="ECO:0000250" key="1"/>
<accession>P9WLU2</accession>
<accession>L0T9T0</accession>
<accession>P64877</accession>
<accession>Q10771</accession>
<organism>
    <name type="scientific">Mycobacterium tuberculosis (strain CDC 1551 / Oshkosh)</name>
    <dbReference type="NCBI Taxonomy" id="83331"/>
    <lineage>
        <taxon>Bacteria</taxon>
        <taxon>Bacillati</taxon>
        <taxon>Actinomycetota</taxon>
        <taxon>Actinomycetes</taxon>
        <taxon>Mycobacteriales</taxon>
        <taxon>Mycobacteriaceae</taxon>
        <taxon>Mycobacterium</taxon>
        <taxon>Mycobacterium tuberculosis complex</taxon>
    </lineage>
</organism>
<sequence length="72" mass="8241">MYRWCMSRTNIDIDDELAAEVMRRFGLTTKRAAVDLALRRLVGSPLSREFLLGLEGVGWEGDLDDLRSDRPD</sequence>